<accession>A6U872</accession>
<name>RS14_SINMW</name>
<organism>
    <name type="scientific">Sinorhizobium medicae (strain WSM419)</name>
    <name type="common">Ensifer medicae</name>
    <dbReference type="NCBI Taxonomy" id="366394"/>
    <lineage>
        <taxon>Bacteria</taxon>
        <taxon>Pseudomonadati</taxon>
        <taxon>Pseudomonadota</taxon>
        <taxon>Alphaproteobacteria</taxon>
        <taxon>Hyphomicrobiales</taxon>
        <taxon>Rhizobiaceae</taxon>
        <taxon>Sinorhizobium/Ensifer group</taxon>
        <taxon>Sinorhizobium</taxon>
    </lineage>
</organism>
<protein>
    <recommendedName>
        <fullName evidence="1">Small ribosomal subunit protein uS14</fullName>
    </recommendedName>
    <alternativeName>
        <fullName evidence="3">30S ribosomal protein S14</fullName>
    </alternativeName>
</protein>
<gene>
    <name evidence="1" type="primary">rpsN</name>
    <name type="ordered locus">Smed_0999</name>
</gene>
<dbReference type="EMBL" id="CP000738">
    <property type="protein sequence ID" value="ABR59852.1"/>
    <property type="molecule type" value="Genomic_DNA"/>
</dbReference>
<dbReference type="RefSeq" id="WP_011975180.1">
    <property type="nucleotide sequence ID" value="NC_009636.1"/>
</dbReference>
<dbReference type="RefSeq" id="YP_001326687.1">
    <property type="nucleotide sequence ID" value="NC_009636.1"/>
</dbReference>
<dbReference type="SMR" id="A6U872"/>
<dbReference type="STRING" id="366394.Smed_0999"/>
<dbReference type="GeneID" id="61614917"/>
<dbReference type="KEGG" id="smd:Smed_0999"/>
<dbReference type="PATRIC" id="fig|366394.8.peg.4120"/>
<dbReference type="eggNOG" id="COG0199">
    <property type="taxonomic scope" value="Bacteria"/>
</dbReference>
<dbReference type="HOGENOM" id="CLU_139869_0_1_5"/>
<dbReference type="OrthoDB" id="9810484at2"/>
<dbReference type="Proteomes" id="UP000001108">
    <property type="component" value="Chromosome"/>
</dbReference>
<dbReference type="GO" id="GO:0005737">
    <property type="term" value="C:cytoplasm"/>
    <property type="evidence" value="ECO:0007669"/>
    <property type="project" value="UniProtKB-ARBA"/>
</dbReference>
<dbReference type="GO" id="GO:0015935">
    <property type="term" value="C:small ribosomal subunit"/>
    <property type="evidence" value="ECO:0007669"/>
    <property type="project" value="TreeGrafter"/>
</dbReference>
<dbReference type="GO" id="GO:0019843">
    <property type="term" value="F:rRNA binding"/>
    <property type="evidence" value="ECO:0007669"/>
    <property type="project" value="UniProtKB-UniRule"/>
</dbReference>
<dbReference type="GO" id="GO:0003735">
    <property type="term" value="F:structural constituent of ribosome"/>
    <property type="evidence" value="ECO:0007669"/>
    <property type="project" value="InterPro"/>
</dbReference>
<dbReference type="GO" id="GO:0006412">
    <property type="term" value="P:translation"/>
    <property type="evidence" value="ECO:0007669"/>
    <property type="project" value="UniProtKB-UniRule"/>
</dbReference>
<dbReference type="FunFam" id="1.10.287.1480:FF:000001">
    <property type="entry name" value="30S ribosomal protein S14"/>
    <property type="match status" value="1"/>
</dbReference>
<dbReference type="Gene3D" id="1.10.287.1480">
    <property type="match status" value="1"/>
</dbReference>
<dbReference type="HAMAP" id="MF_00537">
    <property type="entry name" value="Ribosomal_uS14_1"/>
    <property type="match status" value="1"/>
</dbReference>
<dbReference type="InterPro" id="IPR001209">
    <property type="entry name" value="Ribosomal_uS14"/>
</dbReference>
<dbReference type="InterPro" id="IPR023036">
    <property type="entry name" value="Ribosomal_uS14_bac/plastid"/>
</dbReference>
<dbReference type="InterPro" id="IPR018271">
    <property type="entry name" value="Ribosomal_uS14_CS"/>
</dbReference>
<dbReference type="NCBIfam" id="NF006477">
    <property type="entry name" value="PRK08881.1"/>
    <property type="match status" value="1"/>
</dbReference>
<dbReference type="PANTHER" id="PTHR19836">
    <property type="entry name" value="30S RIBOSOMAL PROTEIN S14"/>
    <property type="match status" value="1"/>
</dbReference>
<dbReference type="PANTHER" id="PTHR19836:SF19">
    <property type="entry name" value="SMALL RIBOSOMAL SUBUNIT PROTEIN US14M"/>
    <property type="match status" value="1"/>
</dbReference>
<dbReference type="Pfam" id="PF00253">
    <property type="entry name" value="Ribosomal_S14"/>
    <property type="match status" value="1"/>
</dbReference>
<dbReference type="SUPFAM" id="SSF57716">
    <property type="entry name" value="Glucocorticoid receptor-like (DNA-binding domain)"/>
    <property type="match status" value="1"/>
</dbReference>
<dbReference type="PROSITE" id="PS00527">
    <property type="entry name" value="RIBOSOMAL_S14"/>
    <property type="match status" value="1"/>
</dbReference>
<proteinExistence type="inferred from homology"/>
<evidence type="ECO:0000255" key="1">
    <source>
        <dbReference type="HAMAP-Rule" id="MF_00537"/>
    </source>
</evidence>
<evidence type="ECO:0000256" key="2">
    <source>
        <dbReference type="SAM" id="MobiDB-lite"/>
    </source>
</evidence>
<evidence type="ECO:0000305" key="3"/>
<sequence length="101" mass="11531">MAKTSAVEKNKRRRKLVANHSAKRAALKATIMNQSLPIEERFKATLKLAELPRDGSKTRIRNRCEVTGRPRAYYRKLRMSRIALRELGNLGKVPGVVKSSW</sequence>
<keyword id="KW-0687">Ribonucleoprotein</keyword>
<keyword id="KW-0689">Ribosomal protein</keyword>
<keyword id="KW-0694">RNA-binding</keyword>
<keyword id="KW-0699">rRNA-binding</keyword>
<feature type="chain" id="PRO_1000128594" description="Small ribosomal subunit protein uS14">
    <location>
        <begin position="1"/>
        <end position="101"/>
    </location>
</feature>
<feature type="region of interest" description="Disordered" evidence="2">
    <location>
        <begin position="1"/>
        <end position="20"/>
    </location>
</feature>
<feature type="compositionally biased region" description="Basic residues" evidence="2">
    <location>
        <begin position="10"/>
        <end position="20"/>
    </location>
</feature>
<reference key="1">
    <citation type="submission" date="2007-06" db="EMBL/GenBank/DDBJ databases">
        <title>Complete sequence of Sinorhizobium medicae WSM419 chromosome.</title>
        <authorList>
            <consortium name="US DOE Joint Genome Institute"/>
            <person name="Copeland A."/>
            <person name="Lucas S."/>
            <person name="Lapidus A."/>
            <person name="Barry K."/>
            <person name="Glavina del Rio T."/>
            <person name="Dalin E."/>
            <person name="Tice H."/>
            <person name="Pitluck S."/>
            <person name="Chain P."/>
            <person name="Malfatti S."/>
            <person name="Shin M."/>
            <person name="Vergez L."/>
            <person name="Schmutz J."/>
            <person name="Larimer F."/>
            <person name="Land M."/>
            <person name="Hauser L."/>
            <person name="Kyrpides N."/>
            <person name="Mikhailova N."/>
            <person name="Reeve W.G."/>
            <person name="Richardson P."/>
        </authorList>
    </citation>
    <scope>NUCLEOTIDE SEQUENCE [LARGE SCALE GENOMIC DNA]</scope>
    <source>
        <strain>WSM419</strain>
    </source>
</reference>
<comment type="function">
    <text evidence="1">Binds 16S rRNA, required for the assembly of 30S particles and may also be responsible for determining the conformation of the 16S rRNA at the A site.</text>
</comment>
<comment type="subunit">
    <text evidence="1">Part of the 30S ribosomal subunit. Contacts proteins S3 and S10.</text>
</comment>
<comment type="similarity">
    <text evidence="1">Belongs to the universal ribosomal protein uS14 family.</text>
</comment>